<sequence length="891" mass="95614">MSGVNDIRSAFLNYFAANGHEIVPSSPLVPRNDPTLMFTNAGMVQFKNVFTGVEKRPYQRATTSQKCVRAGGKHNDLDNVGYTARHHTFFEMLGNFSFGDYFKDRAIELAWKLVTEEFGLPKDKLIATVYIDDDEAFGLWKKIAGLPDSRIIRIAGADNFWQMGDTGPCGPCSEIFYDHGDKIPGGPPGSPDEDGDRFVEIWNLVFMQYEKLPDGSRLNLPKPSIDTGAGLERVAAVLQGKHDNYDIDLFVALIRAAADLTGADPHGPMKASLRVIADHLRATSFLIADGVLPSNEGRGYVLRRIMRRAMRHAQLLGAKEPLMWRLVGVLVREMGEAFPELQRARPLIEETLRLEETRFRKTLERGLSILDEKSASLKKGDMFDGETAFTLYDTYGFPLDLTQDALRARGIGVDIASFTDAMEQQKAKARASWSGSGEAATETIWFPLREKLGATEFLGYETEIAEGAVAALVKDGKEADSLKAGESGAIVLNQTPFYGESGGQVGDTGILTGDGVRVRVTDTQKKAGDLFVHLGTVEQGTLTPGMALALEVDRARRGAIRANHSATHLLHEALRQVLGDHIAQRGSLVAPERLRFDFVHNKPISADELRRIEDIANDVVLENGEVTTRLMAVDDAREAGARALFGEKYGDEVRVVSMGSTGRQGAASNALGWSVELCGGTHVKRTGDIGLISVTGESAVASGVRRIEALTGHHARHHANDAIQLAKTAAGELRTTLDDMPPRITSLMEERKKLERELSEARKKLAMGGGAASASSGAAGVRDVGGIKLMARSVEGIEIKDLKNLADQGKKQLGSGVVALVATSGDGKASIVVGVTPDLVTRFSAVDLVRKASEVLGGKGGGGKPDMAQAGGPDGAKAGAALDAIAAAMGG</sequence>
<keyword id="KW-0030">Aminoacyl-tRNA synthetase</keyword>
<keyword id="KW-0067">ATP-binding</keyword>
<keyword id="KW-0963">Cytoplasm</keyword>
<keyword id="KW-0436">Ligase</keyword>
<keyword id="KW-0479">Metal-binding</keyword>
<keyword id="KW-0547">Nucleotide-binding</keyword>
<keyword id="KW-0648">Protein biosynthesis</keyword>
<keyword id="KW-1185">Reference proteome</keyword>
<keyword id="KW-0694">RNA-binding</keyword>
<keyword id="KW-0820">tRNA-binding</keyword>
<keyword id="KW-0862">Zinc</keyword>
<comment type="function">
    <text evidence="1">Catalyzes the attachment of alanine to tRNA(Ala) in a two-step reaction: alanine is first activated by ATP to form Ala-AMP and then transferred to the acceptor end of tRNA(Ala). Also edits incorrectly charged Ser-tRNA(Ala) and Gly-tRNA(Ala) via its editing domain.</text>
</comment>
<comment type="catalytic activity">
    <reaction evidence="1">
        <text>tRNA(Ala) + L-alanine + ATP = L-alanyl-tRNA(Ala) + AMP + diphosphate</text>
        <dbReference type="Rhea" id="RHEA:12540"/>
        <dbReference type="Rhea" id="RHEA-COMP:9657"/>
        <dbReference type="Rhea" id="RHEA-COMP:9923"/>
        <dbReference type="ChEBI" id="CHEBI:30616"/>
        <dbReference type="ChEBI" id="CHEBI:33019"/>
        <dbReference type="ChEBI" id="CHEBI:57972"/>
        <dbReference type="ChEBI" id="CHEBI:78442"/>
        <dbReference type="ChEBI" id="CHEBI:78497"/>
        <dbReference type="ChEBI" id="CHEBI:456215"/>
        <dbReference type="EC" id="6.1.1.7"/>
    </reaction>
</comment>
<comment type="cofactor">
    <cofactor evidence="1">
        <name>Zn(2+)</name>
        <dbReference type="ChEBI" id="CHEBI:29105"/>
    </cofactor>
    <text evidence="1">Binds 1 zinc ion per subunit.</text>
</comment>
<comment type="subcellular location">
    <subcellularLocation>
        <location evidence="1">Cytoplasm</location>
    </subcellularLocation>
</comment>
<comment type="domain">
    <text evidence="1">Consists of three domains; the N-terminal catalytic domain, the editing domain and the C-terminal C-Ala domain. The editing domain removes incorrectly charged amino acids, while the C-Ala domain, along with tRNA(Ala), serves as a bridge to cooperatively bring together the editing and aminoacylation centers thus stimulating deacylation of misacylated tRNAs.</text>
</comment>
<comment type="similarity">
    <text evidence="1">Belongs to the class-II aminoacyl-tRNA synthetase family.</text>
</comment>
<comment type="sequence caution" evidence="2">
    <conflict type="erroneous initiation">
        <sequence resource="EMBL-CDS" id="ABE62440"/>
    </conflict>
</comment>
<accession>Q1QMV7</accession>
<organism>
    <name type="scientific">Nitrobacter hamburgensis (strain DSM 10229 / NCIMB 13809 / X14)</name>
    <dbReference type="NCBI Taxonomy" id="323097"/>
    <lineage>
        <taxon>Bacteria</taxon>
        <taxon>Pseudomonadati</taxon>
        <taxon>Pseudomonadota</taxon>
        <taxon>Alphaproteobacteria</taxon>
        <taxon>Hyphomicrobiales</taxon>
        <taxon>Nitrobacteraceae</taxon>
        <taxon>Nitrobacter</taxon>
    </lineage>
</organism>
<reference key="1">
    <citation type="submission" date="2006-03" db="EMBL/GenBank/DDBJ databases">
        <title>Complete sequence of chromosome of Nitrobacter hamburgensis X14.</title>
        <authorList>
            <consortium name="US DOE Joint Genome Institute"/>
            <person name="Copeland A."/>
            <person name="Lucas S."/>
            <person name="Lapidus A."/>
            <person name="Barry K."/>
            <person name="Detter J.C."/>
            <person name="Glavina del Rio T."/>
            <person name="Hammon N."/>
            <person name="Israni S."/>
            <person name="Dalin E."/>
            <person name="Tice H."/>
            <person name="Pitluck S."/>
            <person name="Chain P."/>
            <person name="Malfatti S."/>
            <person name="Shin M."/>
            <person name="Vergez L."/>
            <person name="Schmutz J."/>
            <person name="Larimer F."/>
            <person name="Land M."/>
            <person name="Hauser L."/>
            <person name="Kyrpides N."/>
            <person name="Ivanova N."/>
            <person name="Ward B."/>
            <person name="Arp D."/>
            <person name="Klotz M."/>
            <person name="Stein L."/>
            <person name="O'Mullan G."/>
            <person name="Starkenburg S."/>
            <person name="Sayavedra L."/>
            <person name="Poret-Peterson A.T."/>
            <person name="Gentry M.E."/>
            <person name="Bruce D."/>
            <person name="Richardson P."/>
        </authorList>
    </citation>
    <scope>NUCLEOTIDE SEQUENCE [LARGE SCALE GENOMIC DNA]</scope>
    <source>
        <strain>DSM 10229 / NCIMB 13809 / X14</strain>
    </source>
</reference>
<proteinExistence type="inferred from homology"/>
<feature type="chain" id="PRO_0000347698" description="Alanine--tRNA ligase">
    <location>
        <begin position="1"/>
        <end position="891"/>
    </location>
</feature>
<feature type="binding site" evidence="1">
    <location>
        <position position="564"/>
    </location>
    <ligand>
        <name>Zn(2+)</name>
        <dbReference type="ChEBI" id="CHEBI:29105"/>
    </ligand>
</feature>
<feature type="binding site" evidence="1">
    <location>
        <position position="568"/>
    </location>
    <ligand>
        <name>Zn(2+)</name>
        <dbReference type="ChEBI" id="CHEBI:29105"/>
    </ligand>
</feature>
<feature type="binding site" evidence="1">
    <location>
        <position position="678"/>
    </location>
    <ligand>
        <name>Zn(2+)</name>
        <dbReference type="ChEBI" id="CHEBI:29105"/>
    </ligand>
</feature>
<feature type="binding site" evidence="1">
    <location>
        <position position="682"/>
    </location>
    <ligand>
        <name>Zn(2+)</name>
        <dbReference type="ChEBI" id="CHEBI:29105"/>
    </ligand>
</feature>
<name>SYA_NITHX</name>
<evidence type="ECO:0000255" key="1">
    <source>
        <dbReference type="HAMAP-Rule" id="MF_00036"/>
    </source>
</evidence>
<evidence type="ECO:0000305" key="2"/>
<dbReference type="EC" id="6.1.1.7" evidence="1"/>
<dbReference type="EMBL" id="CP000319">
    <property type="protein sequence ID" value="ABE62440.1"/>
    <property type="status" value="ALT_INIT"/>
    <property type="molecule type" value="Genomic_DNA"/>
</dbReference>
<dbReference type="RefSeq" id="WP_041357852.1">
    <property type="nucleotide sequence ID" value="NC_007964.1"/>
</dbReference>
<dbReference type="SMR" id="Q1QMV7"/>
<dbReference type="STRING" id="323097.Nham_1621"/>
<dbReference type="KEGG" id="nha:Nham_1621"/>
<dbReference type="eggNOG" id="COG0013">
    <property type="taxonomic scope" value="Bacteria"/>
</dbReference>
<dbReference type="HOGENOM" id="CLU_004485_1_1_5"/>
<dbReference type="OrthoDB" id="9803884at2"/>
<dbReference type="Proteomes" id="UP000001953">
    <property type="component" value="Chromosome"/>
</dbReference>
<dbReference type="GO" id="GO:0005829">
    <property type="term" value="C:cytosol"/>
    <property type="evidence" value="ECO:0007669"/>
    <property type="project" value="TreeGrafter"/>
</dbReference>
<dbReference type="GO" id="GO:0004813">
    <property type="term" value="F:alanine-tRNA ligase activity"/>
    <property type="evidence" value="ECO:0007669"/>
    <property type="project" value="UniProtKB-UniRule"/>
</dbReference>
<dbReference type="GO" id="GO:0002161">
    <property type="term" value="F:aminoacyl-tRNA deacylase activity"/>
    <property type="evidence" value="ECO:0007669"/>
    <property type="project" value="TreeGrafter"/>
</dbReference>
<dbReference type="GO" id="GO:0005524">
    <property type="term" value="F:ATP binding"/>
    <property type="evidence" value="ECO:0007669"/>
    <property type="project" value="UniProtKB-UniRule"/>
</dbReference>
<dbReference type="GO" id="GO:0000049">
    <property type="term" value="F:tRNA binding"/>
    <property type="evidence" value="ECO:0007669"/>
    <property type="project" value="UniProtKB-KW"/>
</dbReference>
<dbReference type="GO" id="GO:0008270">
    <property type="term" value="F:zinc ion binding"/>
    <property type="evidence" value="ECO:0007669"/>
    <property type="project" value="UniProtKB-UniRule"/>
</dbReference>
<dbReference type="GO" id="GO:0006419">
    <property type="term" value="P:alanyl-tRNA aminoacylation"/>
    <property type="evidence" value="ECO:0007669"/>
    <property type="project" value="UniProtKB-UniRule"/>
</dbReference>
<dbReference type="GO" id="GO:0045892">
    <property type="term" value="P:negative regulation of DNA-templated transcription"/>
    <property type="evidence" value="ECO:0007669"/>
    <property type="project" value="TreeGrafter"/>
</dbReference>
<dbReference type="CDD" id="cd00673">
    <property type="entry name" value="AlaRS_core"/>
    <property type="match status" value="1"/>
</dbReference>
<dbReference type="FunFam" id="2.40.30.130:FF:000001">
    <property type="entry name" value="Alanine--tRNA ligase"/>
    <property type="match status" value="1"/>
</dbReference>
<dbReference type="FunFam" id="3.10.310.40:FF:000001">
    <property type="entry name" value="Alanine--tRNA ligase"/>
    <property type="match status" value="1"/>
</dbReference>
<dbReference type="FunFam" id="3.30.54.20:FF:000001">
    <property type="entry name" value="Alanine--tRNA ligase"/>
    <property type="match status" value="1"/>
</dbReference>
<dbReference type="FunFam" id="3.30.930.10:FF:000004">
    <property type="entry name" value="Alanine--tRNA ligase"/>
    <property type="match status" value="1"/>
</dbReference>
<dbReference type="FunFam" id="3.30.980.10:FF:000004">
    <property type="entry name" value="Alanine--tRNA ligase, cytoplasmic"/>
    <property type="match status" value="1"/>
</dbReference>
<dbReference type="Gene3D" id="2.40.30.130">
    <property type="match status" value="1"/>
</dbReference>
<dbReference type="Gene3D" id="3.10.310.40">
    <property type="match status" value="1"/>
</dbReference>
<dbReference type="Gene3D" id="3.30.54.20">
    <property type="match status" value="1"/>
</dbReference>
<dbReference type="Gene3D" id="6.10.250.550">
    <property type="match status" value="1"/>
</dbReference>
<dbReference type="Gene3D" id="3.30.930.10">
    <property type="entry name" value="Bira Bifunctional Protein, Domain 2"/>
    <property type="match status" value="1"/>
</dbReference>
<dbReference type="Gene3D" id="3.30.980.10">
    <property type="entry name" value="Threonyl-trna Synthetase, Chain A, domain 2"/>
    <property type="match status" value="1"/>
</dbReference>
<dbReference type="HAMAP" id="MF_00036_B">
    <property type="entry name" value="Ala_tRNA_synth_B"/>
    <property type="match status" value="1"/>
</dbReference>
<dbReference type="InterPro" id="IPR045864">
    <property type="entry name" value="aa-tRNA-synth_II/BPL/LPL"/>
</dbReference>
<dbReference type="InterPro" id="IPR002318">
    <property type="entry name" value="Ala-tRNA-lgiase_IIc"/>
</dbReference>
<dbReference type="InterPro" id="IPR018162">
    <property type="entry name" value="Ala-tRNA-ligase_IIc_anticod-bd"/>
</dbReference>
<dbReference type="InterPro" id="IPR018165">
    <property type="entry name" value="Ala-tRNA-synth_IIc_core"/>
</dbReference>
<dbReference type="InterPro" id="IPR018164">
    <property type="entry name" value="Ala-tRNA-synth_IIc_N"/>
</dbReference>
<dbReference type="InterPro" id="IPR050058">
    <property type="entry name" value="Ala-tRNA_ligase"/>
</dbReference>
<dbReference type="InterPro" id="IPR023033">
    <property type="entry name" value="Ala_tRNA_ligase_euk/bac"/>
</dbReference>
<dbReference type="InterPro" id="IPR003156">
    <property type="entry name" value="DHHA1_dom"/>
</dbReference>
<dbReference type="InterPro" id="IPR018163">
    <property type="entry name" value="Thr/Ala-tRNA-synth_IIc_edit"/>
</dbReference>
<dbReference type="InterPro" id="IPR009000">
    <property type="entry name" value="Transl_B-barrel_sf"/>
</dbReference>
<dbReference type="InterPro" id="IPR012947">
    <property type="entry name" value="tRNA_SAD"/>
</dbReference>
<dbReference type="NCBIfam" id="TIGR00344">
    <property type="entry name" value="alaS"/>
    <property type="match status" value="1"/>
</dbReference>
<dbReference type="PANTHER" id="PTHR11777:SF9">
    <property type="entry name" value="ALANINE--TRNA LIGASE, CYTOPLASMIC"/>
    <property type="match status" value="1"/>
</dbReference>
<dbReference type="PANTHER" id="PTHR11777">
    <property type="entry name" value="ALANYL-TRNA SYNTHETASE"/>
    <property type="match status" value="1"/>
</dbReference>
<dbReference type="Pfam" id="PF02272">
    <property type="entry name" value="DHHA1"/>
    <property type="match status" value="1"/>
</dbReference>
<dbReference type="Pfam" id="PF01411">
    <property type="entry name" value="tRNA-synt_2c"/>
    <property type="match status" value="1"/>
</dbReference>
<dbReference type="Pfam" id="PF07973">
    <property type="entry name" value="tRNA_SAD"/>
    <property type="match status" value="1"/>
</dbReference>
<dbReference type="PRINTS" id="PR00980">
    <property type="entry name" value="TRNASYNTHALA"/>
</dbReference>
<dbReference type="SMART" id="SM00863">
    <property type="entry name" value="tRNA_SAD"/>
    <property type="match status" value="1"/>
</dbReference>
<dbReference type="SUPFAM" id="SSF55681">
    <property type="entry name" value="Class II aaRS and biotin synthetases"/>
    <property type="match status" value="1"/>
</dbReference>
<dbReference type="SUPFAM" id="SSF101353">
    <property type="entry name" value="Putative anticodon-binding domain of alanyl-tRNA synthetase (AlaRS)"/>
    <property type="match status" value="1"/>
</dbReference>
<dbReference type="SUPFAM" id="SSF55186">
    <property type="entry name" value="ThrRS/AlaRS common domain"/>
    <property type="match status" value="1"/>
</dbReference>
<dbReference type="SUPFAM" id="SSF50447">
    <property type="entry name" value="Translation proteins"/>
    <property type="match status" value="1"/>
</dbReference>
<dbReference type="PROSITE" id="PS50860">
    <property type="entry name" value="AA_TRNA_LIGASE_II_ALA"/>
    <property type="match status" value="1"/>
</dbReference>
<gene>
    <name evidence="1" type="primary">alaS</name>
    <name type="ordered locus">Nham_1621</name>
</gene>
<protein>
    <recommendedName>
        <fullName evidence="1">Alanine--tRNA ligase</fullName>
        <ecNumber evidence="1">6.1.1.7</ecNumber>
    </recommendedName>
    <alternativeName>
        <fullName evidence="1">Alanyl-tRNA synthetase</fullName>
        <shortName evidence="1">AlaRS</shortName>
    </alternativeName>
</protein>